<sequence>MAVVTMKQLLDSGTHFGHQTRRWNPKMKRFIFTDRNGIYIIDLQQTLTFIDKAYEFVKETVAHGGTVLFVGTKKQAQESIAAEATRVGMPYVNQRWLGGMLTNFSTVHKRLQRLKELEAMEQTGGFEGRTKKEILGLTREKNKLERSLGGIRDMSKVPSAIWVVDTNKEHIAVGEARKLGIPVIAILDTNCDPDEVDYPIPGNDDAIRSAALLTKVIASAVAEGLQARAGVGRGDGKPEVEAAEPLAEWEQELLASATATAAPTEAGAPEPTTDPS</sequence>
<protein>
    <recommendedName>
        <fullName evidence="1">Small ribosomal subunit protein uS2</fullName>
    </recommendedName>
    <alternativeName>
        <fullName evidence="3">30S ribosomal protein S2</fullName>
    </alternativeName>
</protein>
<name>RS2_MYCPA</name>
<evidence type="ECO:0000255" key="1">
    <source>
        <dbReference type="HAMAP-Rule" id="MF_00291"/>
    </source>
</evidence>
<evidence type="ECO:0000256" key="2">
    <source>
        <dbReference type="SAM" id="MobiDB-lite"/>
    </source>
</evidence>
<evidence type="ECO:0000305" key="3"/>
<keyword id="KW-1185">Reference proteome</keyword>
<keyword id="KW-0687">Ribonucleoprotein</keyword>
<keyword id="KW-0689">Ribosomal protein</keyword>
<gene>
    <name evidence="1" type="primary">rpsB</name>
    <name type="ordered locus">MAP_2956c</name>
</gene>
<feature type="chain" id="PRO_0000134200" description="Small ribosomal subunit protein uS2">
    <location>
        <begin position="1"/>
        <end position="276"/>
    </location>
</feature>
<feature type="region of interest" description="Disordered" evidence="2">
    <location>
        <begin position="255"/>
        <end position="276"/>
    </location>
</feature>
<dbReference type="EMBL" id="AE016958">
    <property type="protein sequence ID" value="AAS05273.1"/>
    <property type="molecule type" value="Genomic_DNA"/>
</dbReference>
<dbReference type="RefSeq" id="WP_003875093.1">
    <property type="nucleotide sequence ID" value="NZ_CP106873.1"/>
</dbReference>
<dbReference type="SMR" id="Q73VQ7"/>
<dbReference type="STRING" id="262316.MAP_2956c"/>
<dbReference type="GeneID" id="75271137"/>
<dbReference type="KEGG" id="mpa:MAP_2956c"/>
<dbReference type="eggNOG" id="COG0052">
    <property type="taxonomic scope" value="Bacteria"/>
</dbReference>
<dbReference type="HOGENOM" id="CLU_040318_2_3_11"/>
<dbReference type="Proteomes" id="UP000000580">
    <property type="component" value="Chromosome"/>
</dbReference>
<dbReference type="GO" id="GO:0022627">
    <property type="term" value="C:cytosolic small ribosomal subunit"/>
    <property type="evidence" value="ECO:0007669"/>
    <property type="project" value="TreeGrafter"/>
</dbReference>
<dbReference type="GO" id="GO:0003735">
    <property type="term" value="F:structural constituent of ribosome"/>
    <property type="evidence" value="ECO:0007669"/>
    <property type="project" value="InterPro"/>
</dbReference>
<dbReference type="GO" id="GO:0006412">
    <property type="term" value="P:translation"/>
    <property type="evidence" value="ECO:0007669"/>
    <property type="project" value="UniProtKB-UniRule"/>
</dbReference>
<dbReference type="CDD" id="cd01425">
    <property type="entry name" value="RPS2"/>
    <property type="match status" value="1"/>
</dbReference>
<dbReference type="FunFam" id="1.10.287.610:FF:000001">
    <property type="entry name" value="30S ribosomal protein S2"/>
    <property type="match status" value="1"/>
</dbReference>
<dbReference type="Gene3D" id="3.40.50.10490">
    <property type="entry name" value="Glucose-6-phosphate isomerase like protein, domain 1"/>
    <property type="match status" value="1"/>
</dbReference>
<dbReference type="Gene3D" id="1.10.287.610">
    <property type="entry name" value="Helix hairpin bin"/>
    <property type="match status" value="1"/>
</dbReference>
<dbReference type="HAMAP" id="MF_00291_B">
    <property type="entry name" value="Ribosomal_uS2_B"/>
    <property type="match status" value="1"/>
</dbReference>
<dbReference type="InterPro" id="IPR001865">
    <property type="entry name" value="Ribosomal_uS2"/>
</dbReference>
<dbReference type="InterPro" id="IPR005706">
    <property type="entry name" value="Ribosomal_uS2_bac/mit/plastid"/>
</dbReference>
<dbReference type="InterPro" id="IPR018130">
    <property type="entry name" value="Ribosomal_uS2_CS"/>
</dbReference>
<dbReference type="InterPro" id="IPR023591">
    <property type="entry name" value="Ribosomal_uS2_flav_dom_sf"/>
</dbReference>
<dbReference type="NCBIfam" id="TIGR01011">
    <property type="entry name" value="rpsB_bact"/>
    <property type="match status" value="1"/>
</dbReference>
<dbReference type="PANTHER" id="PTHR12534">
    <property type="entry name" value="30S RIBOSOMAL PROTEIN S2 PROKARYOTIC AND ORGANELLAR"/>
    <property type="match status" value="1"/>
</dbReference>
<dbReference type="PANTHER" id="PTHR12534:SF0">
    <property type="entry name" value="SMALL RIBOSOMAL SUBUNIT PROTEIN US2M"/>
    <property type="match status" value="1"/>
</dbReference>
<dbReference type="Pfam" id="PF00318">
    <property type="entry name" value="Ribosomal_S2"/>
    <property type="match status" value="1"/>
</dbReference>
<dbReference type="PRINTS" id="PR00395">
    <property type="entry name" value="RIBOSOMALS2"/>
</dbReference>
<dbReference type="SUPFAM" id="SSF52313">
    <property type="entry name" value="Ribosomal protein S2"/>
    <property type="match status" value="1"/>
</dbReference>
<dbReference type="PROSITE" id="PS00962">
    <property type="entry name" value="RIBOSOMAL_S2_1"/>
    <property type="match status" value="1"/>
</dbReference>
<comment type="similarity">
    <text evidence="1">Belongs to the universal ribosomal protein uS2 family.</text>
</comment>
<accession>Q73VQ7</accession>
<proteinExistence type="inferred from homology"/>
<organism>
    <name type="scientific">Mycolicibacterium paratuberculosis (strain ATCC BAA-968 / K-10)</name>
    <name type="common">Mycobacterium paratuberculosis</name>
    <dbReference type="NCBI Taxonomy" id="262316"/>
    <lineage>
        <taxon>Bacteria</taxon>
        <taxon>Bacillati</taxon>
        <taxon>Actinomycetota</taxon>
        <taxon>Actinomycetes</taxon>
        <taxon>Mycobacteriales</taxon>
        <taxon>Mycobacteriaceae</taxon>
        <taxon>Mycobacterium</taxon>
        <taxon>Mycobacterium avium complex (MAC)</taxon>
    </lineage>
</organism>
<reference key="1">
    <citation type="journal article" date="2005" name="Proc. Natl. Acad. Sci. U.S.A.">
        <title>The complete genome sequence of Mycobacterium avium subspecies paratuberculosis.</title>
        <authorList>
            <person name="Li L."/>
            <person name="Bannantine J.P."/>
            <person name="Zhang Q."/>
            <person name="Amonsin A."/>
            <person name="May B.J."/>
            <person name="Alt D."/>
            <person name="Banerji N."/>
            <person name="Kanjilal S."/>
            <person name="Kapur V."/>
        </authorList>
    </citation>
    <scope>NUCLEOTIDE SEQUENCE [LARGE SCALE GENOMIC DNA]</scope>
    <source>
        <strain>ATCC BAA-968 / K-10</strain>
    </source>
</reference>